<protein>
    <recommendedName>
        <fullName evidence="1">Urease subunit gamma/beta</fullName>
        <ecNumber evidence="1">3.5.1.5</ecNumber>
    </recommendedName>
    <alternativeName>
        <fullName evidence="1">Urea amidohydrolase subunit gamma/beta</fullName>
    </alternativeName>
</protein>
<sequence length="227" mass="23570">MRLTPTERDRLLLFGAAELARARRARGLRLNVPEATALIADTVCEAARDGRRLAEAIAAARAVLGPDDVLPGVADIVTEVHVEAVFDDGSRLAVVTDPIGGGLGDQAPGALLPGPEHTEPEAVVRVLVTNTATVPVSVTSHFHFFEANPRLDFDRAAAYGMRAAVPAGSSVRFGPGESVEIGLVPVGGDRIAIGFAGLVDGPLDAPGAKEEALRRAAACGYLGVEQR</sequence>
<organism>
    <name type="scientific">Streptomyces avermitilis (strain ATCC 31267 / DSM 46492 / JCM 5070 / NBRC 14893 / NCIMB 12804 / NRRL 8165 / MA-4680)</name>
    <dbReference type="NCBI Taxonomy" id="227882"/>
    <lineage>
        <taxon>Bacteria</taxon>
        <taxon>Bacillati</taxon>
        <taxon>Actinomycetota</taxon>
        <taxon>Actinomycetes</taxon>
        <taxon>Kitasatosporales</taxon>
        <taxon>Streptomycetaceae</taxon>
        <taxon>Streptomyces</taxon>
    </lineage>
</organism>
<feature type="chain" id="PRO_0000098078" description="Urease subunit gamma/beta">
    <location>
        <begin position="1"/>
        <end position="227"/>
    </location>
</feature>
<feature type="region of interest" description="Urease gamma">
    <location>
        <begin position="1"/>
        <end position="101"/>
    </location>
</feature>
<feature type="region of interest" description="Urease beta">
    <location>
        <begin position="102"/>
        <end position="227"/>
    </location>
</feature>
<reference key="1">
    <citation type="journal article" date="2001" name="Proc. Natl. Acad. Sci. U.S.A.">
        <title>Genome sequence of an industrial microorganism Streptomyces avermitilis: deducing the ability of producing secondary metabolites.</title>
        <authorList>
            <person name="Omura S."/>
            <person name="Ikeda H."/>
            <person name="Ishikawa J."/>
            <person name="Hanamoto A."/>
            <person name="Takahashi C."/>
            <person name="Shinose M."/>
            <person name="Takahashi Y."/>
            <person name="Horikawa H."/>
            <person name="Nakazawa H."/>
            <person name="Osonoe T."/>
            <person name="Kikuchi H."/>
            <person name="Shiba T."/>
            <person name="Sakaki Y."/>
            <person name="Hattori M."/>
        </authorList>
    </citation>
    <scope>NUCLEOTIDE SEQUENCE [LARGE SCALE GENOMIC DNA]</scope>
    <source>
        <strain>ATCC 31267 / DSM 46492 / JCM 5070 / NBRC 14893 / NCIMB 12804 / NRRL 8165 / MA-4680</strain>
    </source>
</reference>
<reference key="2">
    <citation type="journal article" date="2003" name="Nat. Biotechnol.">
        <title>Complete genome sequence and comparative analysis of the industrial microorganism Streptomyces avermitilis.</title>
        <authorList>
            <person name="Ikeda H."/>
            <person name="Ishikawa J."/>
            <person name="Hanamoto A."/>
            <person name="Shinose M."/>
            <person name="Kikuchi H."/>
            <person name="Shiba T."/>
            <person name="Sakaki Y."/>
            <person name="Hattori M."/>
            <person name="Omura S."/>
        </authorList>
    </citation>
    <scope>NUCLEOTIDE SEQUENCE [LARGE SCALE GENOMIC DNA]</scope>
    <source>
        <strain>ATCC 31267 / DSM 46492 / JCM 5070 / NBRC 14893 / NCIMB 12804 / NRRL 8165 / MA-4680</strain>
    </source>
</reference>
<name>URE23_STRAW</name>
<gene>
    <name evidence="1" type="primary">ureAB</name>
    <name type="ordered locus">SAV_2716</name>
</gene>
<evidence type="ECO:0000255" key="1">
    <source>
        <dbReference type="HAMAP-Rule" id="MF_01955"/>
    </source>
</evidence>
<proteinExistence type="inferred from homology"/>
<keyword id="KW-0963">Cytoplasm</keyword>
<keyword id="KW-0378">Hydrolase</keyword>
<keyword id="KW-1185">Reference proteome</keyword>
<comment type="catalytic activity">
    <reaction evidence="1">
        <text>urea + 2 H2O + H(+) = hydrogencarbonate + 2 NH4(+)</text>
        <dbReference type="Rhea" id="RHEA:20557"/>
        <dbReference type="ChEBI" id="CHEBI:15377"/>
        <dbReference type="ChEBI" id="CHEBI:15378"/>
        <dbReference type="ChEBI" id="CHEBI:16199"/>
        <dbReference type="ChEBI" id="CHEBI:17544"/>
        <dbReference type="ChEBI" id="CHEBI:28938"/>
        <dbReference type="EC" id="3.5.1.5"/>
    </reaction>
</comment>
<comment type="pathway">
    <text evidence="1">Nitrogen metabolism; urea degradation; CO(2) and NH(3) from urea (urease route): step 1/1.</text>
</comment>
<comment type="subunit">
    <text evidence="1">Heterohexamer of 3 UreC (alpha) and 3 UreAB (gamma/beta) subunits.</text>
</comment>
<comment type="subcellular location">
    <subcellularLocation>
        <location evidence="1">Cytoplasm</location>
    </subcellularLocation>
</comment>
<comment type="similarity">
    <text evidence="1">In the N-terminal section; belongs to the urease gamma subunit family.</text>
</comment>
<comment type="similarity">
    <text evidence="1">In the C-terminal section; belongs to the urease beta subunit family.</text>
</comment>
<dbReference type="EC" id="3.5.1.5" evidence="1"/>
<dbReference type="EMBL" id="BA000030">
    <property type="protein sequence ID" value="BAC70427.1"/>
    <property type="molecule type" value="Genomic_DNA"/>
</dbReference>
<dbReference type="SMR" id="Q82JN8"/>
<dbReference type="GeneID" id="41539805"/>
<dbReference type="KEGG" id="sma:SAVERM_2716"/>
<dbReference type="eggNOG" id="COG0831">
    <property type="taxonomic scope" value="Bacteria"/>
</dbReference>
<dbReference type="eggNOG" id="COG0832">
    <property type="taxonomic scope" value="Bacteria"/>
</dbReference>
<dbReference type="HOGENOM" id="CLU_000980_3_0_11"/>
<dbReference type="OrthoDB" id="9797217at2"/>
<dbReference type="UniPathway" id="UPA00258">
    <property type="reaction ID" value="UER00370"/>
</dbReference>
<dbReference type="Proteomes" id="UP000000428">
    <property type="component" value="Chromosome"/>
</dbReference>
<dbReference type="GO" id="GO:0035550">
    <property type="term" value="C:urease complex"/>
    <property type="evidence" value="ECO:0007669"/>
    <property type="project" value="InterPro"/>
</dbReference>
<dbReference type="GO" id="GO:0016151">
    <property type="term" value="F:nickel cation binding"/>
    <property type="evidence" value="ECO:0007669"/>
    <property type="project" value="InterPro"/>
</dbReference>
<dbReference type="GO" id="GO:0009039">
    <property type="term" value="F:urease activity"/>
    <property type="evidence" value="ECO:0007669"/>
    <property type="project" value="UniProtKB-UniRule"/>
</dbReference>
<dbReference type="GO" id="GO:0043419">
    <property type="term" value="P:urea catabolic process"/>
    <property type="evidence" value="ECO:0007669"/>
    <property type="project" value="UniProtKB-UniRule"/>
</dbReference>
<dbReference type="CDD" id="cd00407">
    <property type="entry name" value="Urease_beta"/>
    <property type="match status" value="1"/>
</dbReference>
<dbReference type="Gene3D" id="2.10.150.10">
    <property type="entry name" value="Urease, beta subunit"/>
    <property type="match status" value="1"/>
</dbReference>
<dbReference type="Gene3D" id="3.30.280.10">
    <property type="entry name" value="Urease, gamma-like subunit"/>
    <property type="match status" value="1"/>
</dbReference>
<dbReference type="HAMAP" id="MF_01955">
    <property type="entry name" value="Urease_beta_gamma"/>
    <property type="match status" value="1"/>
</dbReference>
<dbReference type="InterPro" id="IPR002019">
    <property type="entry name" value="Urease_beta-like"/>
</dbReference>
<dbReference type="InterPro" id="IPR036461">
    <property type="entry name" value="Urease_betasu_sf"/>
</dbReference>
<dbReference type="InterPro" id="IPR008223">
    <property type="entry name" value="Urease_gamma-beta_su"/>
</dbReference>
<dbReference type="InterPro" id="IPR002026">
    <property type="entry name" value="Urease_gamma/gamma-beta_su"/>
</dbReference>
<dbReference type="InterPro" id="IPR036463">
    <property type="entry name" value="Urease_gamma_sf"/>
</dbReference>
<dbReference type="InterPro" id="IPR050069">
    <property type="entry name" value="Urease_subunit"/>
</dbReference>
<dbReference type="NCBIfam" id="NF009671">
    <property type="entry name" value="PRK13192.1"/>
    <property type="match status" value="1"/>
</dbReference>
<dbReference type="NCBIfam" id="TIGR00193">
    <property type="entry name" value="urease_gam"/>
    <property type="match status" value="1"/>
</dbReference>
<dbReference type="PANTHER" id="PTHR33569">
    <property type="entry name" value="UREASE"/>
    <property type="match status" value="1"/>
</dbReference>
<dbReference type="PANTHER" id="PTHR33569:SF1">
    <property type="entry name" value="UREASE"/>
    <property type="match status" value="1"/>
</dbReference>
<dbReference type="Pfam" id="PF00699">
    <property type="entry name" value="Urease_beta"/>
    <property type="match status" value="1"/>
</dbReference>
<dbReference type="Pfam" id="PF00547">
    <property type="entry name" value="Urease_gamma"/>
    <property type="match status" value="1"/>
</dbReference>
<dbReference type="PIRSF" id="PIRSF001225">
    <property type="entry name" value="Urease_gammabeta"/>
    <property type="match status" value="1"/>
</dbReference>
<dbReference type="SUPFAM" id="SSF51278">
    <property type="entry name" value="Urease, beta-subunit"/>
    <property type="match status" value="1"/>
</dbReference>
<dbReference type="SUPFAM" id="SSF54111">
    <property type="entry name" value="Urease, gamma-subunit"/>
    <property type="match status" value="1"/>
</dbReference>
<accession>Q82JN8</accession>